<keyword id="KW-0004">4Fe-4S</keyword>
<keyword id="KW-0963">Cytoplasm</keyword>
<keyword id="KW-1015">Disulfide bond</keyword>
<keyword id="KW-0408">Iron</keyword>
<keyword id="KW-0411">Iron-sulfur</keyword>
<keyword id="KW-0479">Metal-binding</keyword>
<keyword id="KW-0489">Methyltransferase</keyword>
<keyword id="KW-0698">rRNA processing</keyword>
<keyword id="KW-0949">S-adenosyl-L-methionine</keyword>
<keyword id="KW-0808">Transferase</keyword>
<keyword id="KW-0819">tRNA processing</keyword>
<accession>A1KUD6</accession>
<name>RLMN_NEIMF</name>
<sequence length="364" mass="40961">MKTNLLNYDLQGLTRHFADMGEKPFRAKQVMRWMHQSGAQNFNEMTDLAKSLRHKLNEQAGIEIPKLMMSQKSSDGTRKWLLDVGTGNGVETVFIPESDRGTLCISSQVGCALECTFCSTGRQGFNRNLTAAEIIGQLWWANKAMGVTPKNERVISNVVMMGMGEPMANFDNVVTALSIMLDDHGYGLSRRRVTVSTSGMVPQMDRLRDVMPVALAVSLHASNDEVRNQIVPLNKKYPLKELMAACQRYLVKAPRDFITFEYVMLDGINDKAQHARELIELVKDVPCKFNLIPFNPFPNSGYERSSNENIRVFRDILQQAGFVVTVRKTRGDDIDAACGQLAGQVQDKTRRQQKWQQILIGQQG</sequence>
<proteinExistence type="inferred from homology"/>
<feature type="chain" id="PRO_0000350280" description="Dual-specificity RNA methyltransferase RlmN">
    <location>
        <begin position="1"/>
        <end position="364"/>
    </location>
</feature>
<feature type="domain" description="Radical SAM core" evidence="2">
    <location>
        <begin position="97"/>
        <end position="333"/>
    </location>
</feature>
<feature type="active site" description="Proton acceptor" evidence="1">
    <location>
        <position position="91"/>
    </location>
</feature>
<feature type="active site" description="S-methylcysteine intermediate" evidence="1">
    <location>
        <position position="338"/>
    </location>
</feature>
<feature type="binding site" evidence="1">
    <location>
        <position position="111"/>
    </location>
    <ligand>
        <name>[4Fe-4S] cluster</name>
        <dbReference type="ChEBI" id="CHEBI:49883"/>
        <note>4Fe-4S-S-AdoMet</note>
    </ligand>
</feature>
<feature type="binding site" evidence="1">
    <location>
        <position position="115"/>
    </location>
    <ligand>
        <name>[4Fe-4S] cluster</name>
        <dbReference type="ChEBI" id="CHEBI:49883"/>
        <note>4Fe-4S-S-AdoMet</note>
    </ligand>
</feature>
<feature type="binding site" evidence="1">
    <location>
        <position position="118"/>
    </location>
    <ligand>
        <name>[4Fe-4S] cluster</name>
        <dbReference type="ChEBI" id="CHEBI:49883"/>
        <note>4Fe-4S-S-AdoMet</note>
    </ligand>
</feature>
<feature type="binding site" evidence="1">
    <location>
        <begin position="164"/>
        <end position="165"/>
    </location>
    <ligand>
        <name>S-adenosyl-L-methionine</name>
        <dbReference type="ChEBI" id="CHEBI:59789"/>
    </ligand>
</feature>
<feature type="binding site" evidence="1">
    <location>
        <position position="196"/>
    </location>
    <ligand>
        <name>S-adenosyl-L-methionine</name>
        <dbReference type="ChEBI" id="CHEBI:59789"/>
    </ligand>
</feature>
<feature type="binding site" evidence="1">
    <location>
        <begin position="218"/>
        <end position="220"/>
    </location>
    <ligand>
        <name>S-adenosyl-L-methionine</name>
        <dbReference type="ChEBI" id="CHEBI:59789"/>
    </ligand>
</feature>
<feature type="binding site" evidence="1">
    <location>
        <position position="295"/>
    </location>
    <ligand>
        <name>S-adenosyl-L-methionine</name>
        <dbReference type="ChEBI" id="CHEBI:59789"/>
    </ligand>
</feature>
<feature type="disulfide bond" description="(transient)" evidence="1">
    <location>
        <begin position="104"/>
        <end position="338"/>
    </location>
</feature>
<organism>
    <name type="scientific">Neisseria meningitidis serogroup C / serotype 2a (strain ATCC 700532 / DSM 15464 / FAM18)</name>
    <dbReference type="NCBI Taxonomy" id="272831"/>
    <lineage>
        <taxon>Bacteria</taxon>
        <taxon>Pseudomonadati</taxon>
        <taxon>Pseudomonadota</taxon>
        <taxon>Betaproteobacteria</taxon>
        <taxon>Neisseriales</taxon>
        <taxon>Neisseriaceae</taxon>
        <taxon>Neisseria</taxon>
    </lineage>
</organism>
<dbReference type="EC" id="2.1.1.192" evidence="1"/>
<dbReference type="EMBL" id="AM421808">
    <property type="protein sequence ID" value="CAM10479.1"/>
    <property type="molecule type" value="Genomic_DNA"/>
</dbReference>
<dbReference type="RefSeq" id="WP_002220873.1">
    <property type="nucleotide sequence ID" value="NC_008767.1"/>
</dbReference>
<dbReference type="SMR" id="A1KUD6"/>
<dbReference type="KEGG" id="nmc:NMC1245"/>
<dbReference type="HOGENOM" id="CLU_029101_2_0_4"/>
<dbReference type="Proteomes" id="UP000002286">
    <property type="component" value="Chromosome"/>
</dbReference>
<dbReference type="GO" id="GO:0005737">
    <property type="term" value="C:cytoplasm"/>
    <property type="evidence" value="ECO:0007669"/>
    <property type="project" value="UniProtKB-SubCell"/>
</dbReference>
<dbReference type="GO" id="GO:0051539">
    <property type="term" value="F:4 iron, 4 sulfur cluster binding"/>
    <property type="evidence" value="ECO:0007669"/>
    <property type="project" value="UniProtKB-UniRule"/>
</dbReference>
<dbReference type="GO" id="GO:0046872">
    <property type="term" value="F:metal ion binding"/>
    <property type="evidence" value="ECO:0007669"/>
    <property type="project" value="UniProtKB-KW"/>
</dbReference>
<dbReference type="GO" id="GO:0070040">
    <property type="term" value="F:rRNA (adenine(2503)-C2-)-methyltransferase activity"/>
    <property type="evidence" value="ECO:0007669"/>
    <property type="project" value="UniProtKB-UniRule"/>
</dbReference>
<dbReference type="GO" id="GO:0019843">
    <property type="term" value="F:rRNA binding"/>
    <property type="evidence" value="ECO:0007669"/>
    <property type="project" value="UniProtKB-UniRule"/>
</dbReference>
<dbReference type="GO" id="GO:0002935">
    <property type="term" value="F:tRNA (adenine(37)-C2)-methyltransferase activity"/>
    <property type="evidence" value="ECO:0007669"/>
    <property type="project" value="UniProtKB-UniRule"/>
</dbReference>
<dbReference type="GO" id="GO:0000049">
    <property type="term" value="F:tRNA binding"/>
    <property type="evidence" value="ECO:0007669"/>
    <property type="project" value="UniProtKB-UniRule"/>
</dbReference>
<dbReference type="GO" id="GO:0070475">
    <property type="term" value="P:rRNA base methylation"/>
    <property type="evidence" value="ECO:0007669"/>
    <property type="project" value="UniProtKB-UniRule"/>
</dbReference>
<dbReference type="GO" id="GO:0030488">
    <property type="term" value="P:tRNA methylation"/>
    <property type="evidence" value="ECO:0007669"/>
    <property type="project" value="UniProtKB-UniRule"/>
</dbReference>
<dbReference type="CDD" id="cd01335">
    <property type="entry name" value="Radical_SAM"/>
    <property type="match status" value="1"/>
</dbReference>
<dbReference type="FunFam" id="1.10.150.530:FF:000003">
    <property type="entry name" value="Dual-specificity RNA methyltransferase RlmN"/>
    <property type="match status" value="1"/>
</dbReference>
<dbReference type="FunFam" id="3.20.20.70:FF:000008">
    <property type="entry name" value="Dual-specificity RNA methyltransferase RlmN"/>
    <property type="match status" value="1"/>
</dbReference>
<dbReference type="Gene3D" id="1.10.150.530">
    <property type="match status" value="1"/>
</dbReference>
<dbReference type="Gene3D" id="3.20.20.70">
    <property type="entry name" value="Aldolase class I"/>
    <property type="match status" value="1"/>
</dbReference>
<dbReference type="HAMAP" id="MF_01849">
    <property type="entry name" value="RNA_methyltr_RlmN"/>
    <property type="match status" value="1"/>
</dbReference>
<dbReference type="InterPro" id="IPR013785">
    <property type="entry name" value="Aldolase_TIM"/>
</dbReference>
<dbReference type="InterPro" id="IPR040072">
    <property type="entry name" value="Methyltransferase_A"/>
</dbReference>
<dbReference type="InterPro" id="IPR048641">
    <property type="entry name" value="RlmN_N"/>
</dbReference>
<dbReference type="InterPro" id="IPR027492">
    <property type="entry name" value="RNA_MTrfase_RlmN"/>
</dbReference>
<dbReference type="InterPro" id="IPR004383">
    <property type="entry name" value="rRNA_lsu_MTrfase_RlmN/Cfr"/>
</dbReference>
<dbReference type="InterPro" id="IPR007197">
    <property type="entry name" value="rSAM"/>
</dbReference>
<dbReference type="NCBIfam" id="TIGR00048">
    <property type="entry name" value="rRNA_mod_RlmN"/>
    <property type="match status" value="1"/>
</dbReference>
<dbReference type="PANTHER" id="PTHR30544">
    <property type="entry name" value="23S RRNA METHYLTRANSFERASE"/>
    <property type="match status" value="1"/>
</dbReference>
<dbReference type="PANTHER" id="PTHR30544:SF5">
    <property type="entry name" value="RADICAL SAM CORE DOMAIN-CONTAINING PROTEIN"/>
    <property type="match status" value="1"/>
</dbReference>
<dbReference type="Pfam" id="PF04055">
    <property type="entry name" value="Radical_SAM"/>
    <property type="match status" value="1"/>
</dbReference>
<dbReference type="Pfam" id="PF21016">
    <property type="entry name" value="RlmN_N"/>
    <property type="match status" value="1"/>
</dbReference>
<dbReference type="PIRSF" id="PIRSF006004">
    <property type="entry name" value="CHP00048"/>
    <property type="match status" value="1"/>
</dbReference>
<dbReference type="SFLD" id="SFLDF00275">
    <property type="entry name" value="adenosine_C2_methyltransferase"/>
    <property type="match status" value="1"/>
</dbReference>
<dbReference type="SFLD" id="SFLDG01062">
    <property type="entry name" value="methyltransferase_(Class_A)"/>
    <property type="match status" value="1"/>
</dbReference>
<dbReference type="SUPFAM" id="SSF102114">
    <property type="entry name" value="Radical SAM enzymes"/>
    <property type="match status" value="1"/>
</dbReference>
<dbReference type="PROSITE" id="PS51918">
    <property type="entry name" value="RADICAL_SAM"/>
    <property type="match status" value="1"/>
</dbReference>
<protein>
    <recommendedName>
        <fullName evidence="1">Dual-specificity RNA methyltransferase RlmN</fullName>
        <ecNumber evidence="1">2.1.1.192</ecNumber>
    </recommendedName>
    <alternativeName>
        <fullName evidence="1">23S rRNA (adenine(2503)-C(2))-methyltransferase</fullName>
    </alternativeName>
    <alternativeName>
        <fullName evidence="1">23S rRNA m2A2503 methyltransferase</fullName>
    </alternativeName>
    <alternativeName>
        <fullName evidence="1">Ribosomal RNA large subunit methyltransferase N</fullName>
    </alternativeName>
    <alternativeName>
        <fullName evidence="1">tRNA (adenine(37)-C(2))-methyltransferase</fullName>
    </alternativeName>
    <alternativeName>
        <fullName evidence="1">tRNA m2A37 methyltransferase</fullName>
    </alternativeName>
</protein>
<evidence type="ECO:0000255" key="1">
    <source>
        <dbReference type="HAMAP-Rule" id="MF_01849"/>
    </source>
</evidence>
<evidence type="ECO:0000255" key="2">
    <source>
        <dbReference type="PROSITE-ProRule" id="PRU01266"/>
    </source>
</evidence>
<comment type="function">
    <text evidence="1">Specifically methylates position 2 of adenine 2503 in 23S rRNA and position 2 of adenine 37 in tRNAs. m2A2503 modification seems to play a crucial role in the proofreading step occurring at the peptidyl transferase center and thus would serve to optimize ribosomal fidelity.</text>
</comment>
<comment type="catalytic activity">
    <reaction evidence="1">
        <text>adenosine(2503) in 23S rRNA + 2 reduced [2Fe-2S]-[ferredoxin] + 2 S-adenosyl-L-methionine = 2-methyladenosine(2503) in 23S rRNA + 5'-deoxyadenosine + L-methionine + 2 oxidized [2Fe-2S]-[ferredoxin] + S-adenosyl-L-homocysteine</text>
        <dbReference type="Rhea" id="RHEA:42916"/>
        <dbReference type="Rhea" id="RHEA-COMP:10000"/>
        <dbReference type="Rhea" id="RHEA-COMP:10001"/>
        <dbReference type="Rhea" id="RHEA-COMP:10152"/>
        <dbReference type="Rhea" id="RHEA-COMP:10282"/>
        <dbReference type="ChEBI" id="CHEBI:17319"/>
        <dbReference type="ChEBI" id="CHEBI:33737"/>
        <dbReference type="ChEBI" id="CHEBI:33738"/>
        <dbReference type="ChEBI" id="CHEBI:57844"/>
        <dbReference type="ChEBI" id="CHEBI:57856"/>
        <dbReference type="ChEBI" id="CHEBI:59789"/>
        <dbReference type="ChEBI" id="CHEBI:74411"/>
        <dbReference type="ChEBI" id="CHEBI:74497"/>
        <dbReference type="EC" id="2.1.1.192"/>
    </reaction>
</comment>
<comment type="catalytic activity">
    <reaction evidence="1">
        <text>adenosine(37) in tRNA + 2 reduced [2Fe-2S]-[ferredoxin] + 2 S-adenosyl-L-methionine = 2-methyladenosine(37) in tRNA + 5'-deoxyadenosine + L-methionine + 2 oxidized [2Fe-2S]-[ferredoxin] + S-adenosyl-L-homocysteine</text>
        <dbReference type="Rhea" id="RHEA:43332"/>
        <dbReference type="Rhea" id="RHEA-COMP:10000"/>
        <dbReference type="Rhea" id="RHEA-COMP:10001"/>
        <dbReference type="Rhea" id="RHEA-COMP:10162"/>
        <dbReference type="Rhea" id="RHEA-COMP:10485"/>
        <dbReference type="ChEBI" id="CHEBI:17319"/>
        <dbReference type="ChEBI" id="CHEBI:33737"/>
        <dbReference type="ChEBI" id="CHEBI:33738"/>
        <dbReference type="ChEBI" id="CHEBI:57844"/>
        <dbReference type="ChEBI" id="CHEBI:57856"/>
        <dbReference type="ChEBI" id="CHEBI:59789"/>
        <dbReference type="ChEBI" id="CHEBI:74411"/>
        <dbReference type="ChEBI" id="CHEBI:74497"/>
        <dbReference type="EC" id="2.1.1.192"/>
    </reaction>
</comment>
<comment type="cofactor">
    <cofactor evidence="1">
        <name>[4Fe-4S] cluster</name>
        <dbReference type="ChEBI" id="CHEBI:49883"/>
    </cofactor>
    <text evidence="1">Binds 1 [4Fe-4S] cluster. The cluster is coordinated with 3 cysteines and an exchangeable S-adenosyl-L-methionine.</text>
</comment>
<comment type="subcellular location">
    <subcellularLocation>
        <location evidence="1">Cytoplasm</location>
    </subcellularLocation>
</comment>
<comment type="miscellaneous">
    <text evidence="1">Reaction proceeds by a ping-pong mechanism involving intermediate methylation of a conserved cysteine residue.</text>
</comment>
<comment type="similarity">
    <text evidence="1">Belongs to the radical SAM superfamily. RlmN family.</text>
</comment>
<gene>
    <name evidence="1" type="primary">rlmN</name>
    <name type="ordered locus">NMC1245</name>
</gene>
<reference key="1">
    <citation type="journal article" date="2007" name="PLoS Genet.">
        <title>Meningococcal genetic variation mechanisms viewed through comparative analysis of serogroup C strain FAM18.</title>
        <authorList>
            <person name="Bentley S.D."/>
            <person name="Vernikos G.S."/>
            <person name="Snyder L.A.S."/>
            <person name="Churcher C."/>
            <person name="Arrowsmith C."/>
            <person name="Chillingworth T."/>
            <person name="Cronin A."/>
            <person name="Davis P.H."/>
            <person name="Holroyd N.E."/>
            <person name="Jagels K."/>
            <person name="Maddison M."/>
            <person name="Moule S."/>
            <person name="Rabbinowitsch E."/>
            <person name="Sharp S."/>
            <person name="Unwin L."/>
            <person name="Whitehead S."/>
            <person name="Quail M.A."/>
            <person name="Achtman M."/>
            <person name="Barrell B.G."/>
            <person name="Saunders N.J."/>
            <person name="Parkhill J."/>
        </authorList>
    </citation>
    <scope>NUCLEOTIDE SEQUENCE [LARGE SCALE GENOMIC DNA]</scope>
    <source>
        <strain>ATCC 700532 / DSM 15464 / FAM18</strain>
    </source>
</reference>